<organism>
    <name type="scientific">Bacillus anthracis (strain A0248)</name>
    <dbReference type="NCBI Taxonomy" id="592021"/>
    <lineage>
        <taxon>Bacteria</taxon>
        <taxon>Bacillati</taxon>
        <taxon>Bacillota</taxon>
        <taxon>Bacilli</taxon>
        <taxon>Bacillales</taxon>
        <taxon>Bacillaceae</taxon>
        <taxon>Bacillus</taxon>
        <taxon>Bacillus cereus group</taxon>
    </lineage>
</organism>
<proteinExistence type="inferred from homology"/>
<sequence>MKQSVSAEQIELKSSLPGSKKVYVDGPREGMKVPMREIEQSDTNGVPNPPIRVYDTSGPYTDPAYKVELEKGIPTPRHSWILERGDVEAYEGREVKPEDDGVKVASKHTPVFPQMDRKPLRAKQGANVTQMHYARNGIIKSEMEYVAIREGVDPEFVRKEIAEGRAILPANINHPEAEPMIIGRNFHVKVNANIGNSAVSSSIAEEVEKMTWATRWGADTIMDLSTGKNIHTTREWIIRNAPVPVGTVPIYQALEKVNGIAEDLTWEVYRDTLIEQAEQGVDYFTIHAGVLLRYIPITAKRTTGIVSRGGSIMAQWCLFHHKENFLYTHFEEICEIMKQYDVSFSLGDGLRPGSIADANDEAQFSELETLGELTKIAWKHDVQVMIEGPGHVPMHLIKENMEKELDICQGAPFYTLGPLTTDIAPGYDHITSAIGAAMIGWFGTAMLCYVTPKEHLGLPNKDDVREGVITYKIAAHAADLAKGHKTAHQRDDALSKARFEFRWRDQFNLSLDPERAMEYHDETLPAEGAKTAHFCSMCGPKFCSMRISHDIREYAKENDLETTEAIEKGMKEKAKEFKETGSHLYQ</sequence>
<feature type="chain" id="PRO_1000118499" description="Phosphomethylpyrimidine synthase">
    <location>
        <begin position="1"/>
        <end position="586"/>
    </location>
</feature>
<feature type="region of interest" description="Disordered" evidence="2">
    <location>
        <begin position="1"/>
        <end position="58"/>
    </location>
</feature>
<feature type="compositionally biased region" description="Basic and acidic residues" evidence="2">
    <location>
        <begin position="22"/>
        <end position="39"/>
    </location>
</feature>
<feature type="binding site" evidence="1">
    <location>
        <position position="193"/>
    </location>
    <ligand>
        <name>substrate</name>
    </ligand>
</feature>
<feature type="binding site" evidence="1">
    <location>
        <position position="222"/>
    </location>
    <ligand>
        <name>substrate</name>
    </ligand>
</feature>
<feature type="binding site" evidence="1">
    <location>
        <position position="251"/>
    </location>
    <ligand>
        <name>substrate</name>
    </ligand>
</feature>
<feature type="binding site" evidence="1">
    <location>
        <position position="287"/>
    </location>
    <ligand>
        <name>substrate</name>
    </ligand>
</feature>
<feature type="binding site" evidence="1">
    <location>
        <begin position="307"/>
        <end position="309"/>
    </location>
    <ligand>
        <name>substrate</name>
    </ligand>
</feature>
<feature type="binding site" evidence="1">
    <location>
        <begin position="348"/>
        <end position="351"/>
    </location>
    <ligand>
        <name>substrate</name>
    </ligand>
</feature>
<feature type="binding site" evidence="1">
    <location>
        <position position="387"/>
    </location>
    <ligand>
        <name>substrate</name>
    </ligand>
</feature>
<feature type="binding site" evidence="1">
    <location>
        <position position="391"/>
    </location>
    <ligand>
        <name>Zn(2+)</name>
        <dbReference type="ChEBI" id="CHEBI:29105"/>
    </ligand>
</feature>
<feature type="binding site" evidence="1">
    <location>
        <position position="414"/>
    </location>
    <ligand>
        <name>substrate</name>
    </ligand>
</feature>
<feature type="binding site" evidence="1">
    <location>
        <position position="455"/>
    </location>
    <ligand>
        <name>Zn(2+)</name>
        <dbReference type="ChEBI" id="CHEBI:29105"/>
    </ligand>
</feature>
<feature type="binding site" evidence="1">
    <location>
        <position position="535"/>
    </location>
    <ligand>
        <name>[4Fe-4S] cluster</name>
        <dbReference type="ChEBI" id="CHEBI:49883"/>
        <note>4Fe-4S-S-AdoMet</note>
    </ligand>
</feature>
<feature type="binding site" evidence="1">
    <location>
        <position position="538"/>
    </location>
    <ligand>
        <name>[4Fe-4S] cluster</name>
        <dbReference type="ChEBI" id="CHEBI:49883"/>
        <note>4Fe-4S-S-AdoMet</note>
    </ligand>
</feature>
<feature type="binding site" evidence="1">
    <location>
        <position position="543"/>
    </location>
    <ligand>
        <name>[4Fe-4S] cluster</name>
        <dbReference type="ChEBI" id="CHEBI:49883"/>
        <note>4Fe-4S-S-AdoMet</note>
    </ligand>
</feature>
<gene>
    <name evidence="1" type="primary">thiC</name>
    <name type="ordered locus">BAA_5491</name>
</gene>
<comment type="function">
    <text evidence="1">Catalyzes the synthesis of the hydroxymethylpyrimidine phosphate (HMP-P) moiety of thiamine from aminoimidazole ribotide (AIR) in a radical S-adenosyl-L-methionine (SAM)-dependent reaction.</text>
</comment>
<comment type="catalytic activity">
    <reaction evidence="1">
        <text>5-amino-1-(5-phospho-beta-D-ribosyl)imidazole + S-adenosyl-L-methionine = 4-amino-2-methyl-5-(phosphooxymethyl)pyrimidine + CO + 5'-deoxyadenosine + formate + L-methionine + 3 H(+)</text>
        <dbReference type="Rhea" id="RHEA:24840"/>
        <dbReference type="ChEBI" id="CHEBI:15378"/>
        <dbReference type="ChEBI" id="CHEBI:15740"/>
        <dbReference type="ChEBI" id="CHEBI:17245"/>
        <dbReference type="ChEBI" id="CHEBI:17319"/>
        <dbReference type="ChEBI" id="CHEBI:57844"/>
        <dbReference type="ChEBI" id="CHEBI:58354"/>
        <dbReference type="ChEBI" id="CHEBI:59789"/>
        <dbReference type="ChEBI" id="CHEBI:137981"/>
        <dbReference type="EC" id="4.1.99.17"/>
    </reaction>
</comment>
<comment type="cofactor">
    <cofactor evidence="1">
        <name>[4Fe-4S] cluster</name>
        <dbReference type="ChEBI" id="CHEBI:49883"/>
    </cofactor>
    <text evidence="1">Binds 1 [4Fe-4S] cluster per subunit. The cluster is coordinated with 3 cysteines and an exchangeable S-adenosyl-L-methionine.</text>
</comment>
<comment type="pathway">
    <text evidence="1">Cofactor biosynthesis; thiamine diphosphate biosynthesis.</text>
</comment>
<comment type="similarity">
    <text evidence="1">Belongs to the ThiC family.</text>
</comment>
<keyword id="KW-0004">4Fe-4S</keyword>
<keyword id="KW-0408">Iron</keyword>
<keyword id="KW-0411">Iron-sulfur</keyword>
<keyword id="KW-0456">Lyase</keyword>
<keyword id="KW-0479">Metal-binding</keyword>
<keyword id="KW-0949">S-adenosyl-L-methionine</keyword>
<keyword id="KW-0784">Thiamine biosynthesis</keyword>
<keyword id="KW-0862">Zinc</keyword>
<reference key="1">
    <citation type="submission" date="2009-04" db="EMBL/GenBank/DDBJ databases">
        <title>Genome sequence of Bacillus anthracis A0248.</title>
        <authorList>
            <person name="Dodson R.J."/>
            <person name="Munk A.C."/>
            <person name="Bruce D."/>
            <person name="Detter C."/>
            <person name="Tapia R."/>
            <person name="Sutton G."/>
            <person name="Sims D."/>
            <person name="Brettin T."/>
        </authorList>
    </citation>
    <scope>NUCLEOTIDE SEQUENCE [LARGE SCALE GENOMIC DNA]</scope>
    <source>
        <strain>A0248</strain>
    </source>
</reference>
<evidence type="ECO:0000255" key="1">
    <source>
        <dbReference type="HAMAP-Rule" id="MF_00089"/>
    </source>
</evidence>
<evidence type="ECO:0000256" key="2">
    <source>
        <dbReference type="SAM" id="MobiDB-lite"/>
    </source>
</evidence>
<dbReference type="EC" id="4.1.99.17" evidence="1"/>
<dbReference type="EMBL" id="CP001598">
    <property type="protein sequence ID" value="ACQ46707.1"/>
    <property type="molecule type" value="Genomic_DNA"/>
</dbReference>
<dbReference type="RefSeq" id="WP_000814464.1">
    <property type="nucleotide sequence ID" value="NC_012659.1"/>
</dbReference>
<dbReference type="SMR" id="C3P178"/>
<dbReference type="GeneID" id="45025059"/>
<dbReference type="KEGG" id="bai:BAA_5491"/>
<dbReference type="HOGENOM" id="CLU_013181_2_1_9"/>
<dbReference type="UniPathway" id="UPA00060"/>
<dbReference type="GO" id="GO:0005829">
    <property type="term" value="C:cytosol"/>
    <property type="evidence" value="ECO:0007669"/>
    <property type="project" value="TreeGrafter"/>
</dbReference>
<dbReference type="GO" id="GO:0051539">
    <property type="term" value="F:4 iron, 4 sulfur cluster binding"/>
    <property type="evidence" value="ECO:0007669"/>
    <property type="project" value="UniProtKB-KW"/>
</dbReference>
<dbReference type="GO" id="GO:0016830">
    <property type="term" value="F:carbon-carbon lyase activity"/>
    <property type="evidence" value="ECO:0007669"/>
    <property type="project" value="InterPro"/>
</dbReference>
<dbReference type="GO" id="GO:0008270">
    <property type="term" value="F:zinc ion binding"/>
    <property type="evidence" value="ECO:0007669"/>
    <property type="project" value="UniProtKB-UniRule"/>
</dbReference>
<dbReference type="GO" id="GO:0009228">
    <property type="term" value="P:thiamine biosynthetic process"/>
    <property type="evidence" value="ECO:0007669"/>
    <property type="project" value="UniProtKB-KW"/>
</dbReference>
<dbReference type="GO" id="GO:0009229">
    <property type="term" value="P:thiamine diphosphate biosynthetic process"/>
    <property type="evidence" value="ECO:0007669"/>
    <property type="project" value="UniProtKB-UniRule"/>
</dbReference>
<dbReference type="FunFam" id="3.20.20.540:FF:000001">
    <property type="entry name" value="Phosphomethylpyrimidine synthase"/>
    <property type="match status" value="1"/>
</dbReference>
<dbReference type="Gene3D" id="6.10.250.620">
    <property type="match status" value="1"/>
</dbReference>
<dbReference type="Gene3D" id="3.20.20.540">
    <property type="entry name" value="Radical SAM ThiC family, central domain"/>
    <property type="match status" value="1"/>
</dbReference>
<dbReference type="HAMAP" id="MF_00089">
    <property type="entry name" value="ThiC"/>
    <property type="match status" value="1"/>
</dbReference>
<dbReference type="InterPro" id="IPR037509">
    <property type="entry name" value="ThiC"/>
</dbReference>
<dbReference type="InterPro" id="IPR025747">
    <property type="entry name" value="ThiC-associated_dom"/>
</dbReference>
<dbReference type="InterPro" id="IPR038521">
    <property type="entry name" value="ThiC/Bza_core_dom"/>
</dbReference>
<dbReference type="InterPro" id="IPR002817">
    <property type="entry name" value="ThiC/BzaA/B"/>
</dbReference>
<dbReference type="NCBIfam" id="NF006763">
    <property type="entry name" value="PRK09284.1"/>
    <property type="match status" value="1"/>
</dbReference>
<dbReference type="NCBIfam" id="NF009895">
    <property type="entry name" value="PRK13352.1"/>
    <property type="match status" value="1"/>
</dbReference>
<dbReference type="NCBIfam" id="TIGR00190">
    <property type="entry name" value="thiC"/>
    <property type="match status" value="1"/>
</dbReference>
<dbReference type="PANTHER" id="PTHR30557:SF1">
    <property type="entry name" value="PHOSPHOMETHYLPYRIMIDINE SYNTHASE, CHLOROPLASTIC"/>
    <property type="match status" value="1"/>
</dbReference>
<dbReference type="PANTHER" id="PTHR30557">
    <property type="entry name" value="THIAMINE BIOSYNTHESIS PROTEIN THIC"/>
    <property type="match status" value="1"/>
</dbReference>
<dbReference type="Pfam" id="PF13667">
    <property type="entry name" value="ThiC-associated"/>
    <property type="match status" value="1"/>
</dbReference>
<dbReference type="Pfam" id="PF01964">
    <property type="entry name" value="ThiC_Rad_SAM"/>
    <property type="match status" value="1"/>
</dbReference>
<dbReference type="SFLD" id="SFLDF00407">
    <property type="entry name" value="phosphomethylpyrimidine_syntha"/>
    <property type="match status" value="1"/>
</dbReference>
<dbReference type="SFLD" id="SFLDG01114">
    <property type="entry name" value="phosphomethylpyrimidine_syntha"/>
    <property type="match status" value="1"/>
</dbReference>
<dbReference type="SFLD" id="SFLDS00113">
    <property type="entry name" value="Radical_SAM_Phosphomethylpyrim"/>
    <property type="match status" value="1"/>
</dbReference>
<accession>C3P178</accession>
<name>THIC_BACAA</name>
<protein>
    <recommendedName>
        <fullName evidence="1">Phosphomethylpyrimidine synthase</fullName>
        <ecNumber evidence="1">4.1.99.17</ecNumber>
    </recommendedName>
    <alternativeName>
        <fullName evidence="1">Hydroxymethylpyrimidine phosphate synthase</fullName>
        <shortName evidence="1">HMP-P synthase</shortName>
        <shortName evidence="1">HMP-phosphate synthase</shortName>
        <shortName evidence="1">HMPP synthase</shortName>
    </alternativeName>
    <alternativeName>
        <fullName evidence="1">Thiamine biosynthesis protein ThiC</fullName>
    </alternativeName>
</protein>